<dbReference type="EC" id="2.1.3.3" evidence="2"/>
<dbReference type="EMBL" id="AJ252021">
    <property type="protein sequence ID" value="CAB95022.1"/>
    <property type="molecule type" value="Genomic_DNA"/>
</dbReference>
<dbReference type="SMR" id="Q9K4Y9"/>
<dbReference type="SABIO-RK" id="Q9K4Y9"/>
<dbReference type="UniPathway" id="UPA00068">
    <property type="reaction ID" value="UER00112"/>
</dbReference>
<dbReference type="GO" id="GO:0005737">
    <property type="term" value="C:cytoplasm"/>
    <property type="evidence" value="ECO:0007669"/>
    <property type="project" value="UniProtKB-SubCell"/>
</dbReference>
<dbReference type="GO" id="GO:0016597">
    <property type="term" value="F:amino acid binding"/>
    <property type="evidence" value="ECO:0007669"/>
    <property type="project" value="InterPro"/>
</dbReference>
<dbReference type="GO" id="GO:0004585">
    <property type="term" value="F:ornithine carbamoyltransferase activity"/>
    <property type="evidence" value="ECO:0007669"/>
    <property type="project" value="UniProtKB-UniRule"/>
</dbReference>
<dbReference type="GO" id="GO:0042450">
    <property type="term" value="P:arginine biosynthetic process via ornithine"/>
    <property type="evidence" value="ECO:0007669"/>
    <property type="project" value="TreeGrafter"/>
</dbReference>
<dbReference type="GO" id="GO:0019240">
    <property type="term" value="P:citrulline biosynthetic process"/>
    <property type="evidence" value="ECO:0007669"/>
    <property type="project" value="TreeGrafter"/>
</dbReference>
<dbReference type="GO" id="GO:0006526">
    <property type="term" value="P:L-arginine biosynthetic process"/>
    <property type="evidence" value="ECO:0007669"/>
    <property type="project" value="UniProtKB-UniPathway"/>
</dbReference>
<dbReference type="FunFam" id="3.40.50.1370:FF:000008">
    <property type="entry name" value="Ornithine carbamoyltransferase"/>
    <property type="match status" value="1"/>
</dbReference>
<dbReference type="Gene3D" id="3.40.50.1370">
    <property type="entry name" value="Aspartate/ornithine carbamoyltransferase"/>
    <property type="match status" value="2"/>
</dbReference>
<dbReference type="HAMAP" id="MF_01109">
    <property type="entry name" value="OTCase"/>
    <property type="match status" value="1"/>
</dbReference>
<dbReference type="InterPro" id="IPR006132">
    <property type="entry name" value="Asp/Orn_carbamoyltranf_P-bd"/>
</dbReference>
<dbReference type="InterPro" id="IPR006130">
    <property type="entry name" value="Asp/Orn_carbamoylTrfase"/>
</dbReference>
<dbReference type="InterPro" id="IPR036901">
    <property type="entry name" value="Asp/Orn_carbamoylTrfase_sf"/>
</dbReference>
<dbReference type="InterPro" id="IPR006131">
    <property type="entry name" value="Asp_carbamoyltransf_Asp/Orn-bd"/>
</dbReference>
<dbReference type="InterPro" id="IPR002292">
    <property type="entry name" value="Orn/put_carbamltrans"/>
</dbReference>
<dbReference type="InterPro" id="IPR024904">
    <property type="entry name" value="OTCase_ArgI"/>
</dbReference>
<dbReference type="NCBIfam" id="TIGR00658">
    <property type="entry name" value="orni_carb_tr"/>
    <property type="match status" value="1"/>
</dbReference>
<dbReference type="NCBIfam" id="NF001986">
    <property type="entry name" value="PRK00779.1"/>
    <property type="match status" value="1"/>
</dbReference>
<dbReference type="NCBIfam" id="NF011380">
    <property type="entry name" value="PRK14805.1"/>
    <property type="match status" value="1"/>
</dbReference>
<dbReference type="PANTHER" id="PTHR45753">
    <property type="entry name" value="ORNITHINE CARBAMOYLTRANSFERASE, MITOCHONDRIAL"/>
    <property type="match status" value="1"/>
</dbReference>
<dbReference type="PANTHER" id="PTHR45753:SF3">
    <property type="entry name" value="ORNITHINE TRANSCARBAMYLASE, MITOCHONDRIAL"/>
    <property type="match status" value="1"/>
</dbReference>
<dbReference type="Pfam" id="PF00185">
    <property type="entry name" value="OTCace"/>
    <property type="match status" value="1"/>
</dbReference>
<dbReference type="Pfam" id="PF02729">
    <property type="entry name" value="OTCace_N"/>
    <property type="match status" value="1"/>
</dbReference>
<dbReference type="PRINTS" id="PR00100">
    <property type="entry name" value="AOTCASE"/>
</dbReference>
<dbReference type="PRINTS" id="PR00102">
    <property type="entry name" value="OTCASE"/>
</dbReference>
<dbReference type="SUPFAM" id="SSF53671">
    <property type="entry name" value="Aspartate/ornithine carbamoyltransferase"/>
    <property type="match status" value="1"/>
</dbReference>
<accession>Q9K4Y9</accession>
<gene>
    <name evidence="3" type="primary">argF</name>
</gene>
<sequence length="301" mass="32870">MENLLSVKDLSKQQILDLLALAKAVKANPAEYSQALAGKSIVTIYEKPSLRTRVTFDIGIHKLGGHAVYLDAQNGAIGERETVKDFAANISRWADAIVARVVSHKTLEGLVEHGSVPVVNSLCDLYHPCQALADFLTISEHYEDVSKVKLAYVGEGNNVTHSLMLTGAILGAEVTAVCPRGSSPDAQIVKQAMALAEISGGKINVTDNLDDIVDYDVIYGDTWVSMGDDTPLAQVKEKYMPYQINKALLMRTGIKHVLHCQPAHRELEITSEVMDGEHSLIFDQAENRMHAQNAVLLTLLK</sequence>
<keyword id="KW-0028">Amino-acid biosynthesis</keyword>
<keyword id="KW-0055">Arginine biosynthesis</keyword>
<keyword id="KW-0963">Cytoplasm</keyword>
<keyword id="KW-0903">Direct protein sequencing</keyword>
<keyword id="KW-0808">Transferase</keyword>
<evidence type="ECO:0000255" key="1">
    <source>
        <dbReference type="HAMAP-Rule" id="MF_01109"/>
    </source>
</evidence>
<evidence type="ECO:0000269" key="2">
    <source>
    </source>
</evidence>
<evidence type="ECO:0000303" key="3">
    <source>
    </source>
</evidence>
<evidence type="ECO:0000305" key="4"/>
<evidence type="ECO:0000305" key="5">
    <source>
    </source>
</evidence>
<organism>
    <name type="scientific">Moritella abyssi</name>
    <dbReference type="NCBI Taxonomy" id="111292"/>
    <lineage>
        <taxon>Bacteria</taxon>
        <taxon>Pseudomonadati</taxon>
        <taxon>Pseudomonadota</taxon>
        <taxon>Gammaproteobacteria</taxon>
        <taxon>Alteromonadales</taxon>
        <taxon>Moritellaceae</taxon>
        <taxon>Moritella</taxon>
    </lineage>
</organism>
<feature type="chain" id="PRO_0000112948" description="Ornithine carbamoyltransferase">
    <location>
        <begin position="1"/>
        <end position="301"/>
    </location>
</feature>
<feature type="binding site" evidence="1">
    <location>
        <position position="100"/>
    </location>
    <ligand>
        <name>carbamoyl phosphate</name>
        <dbReference type="ChEBI" id="CHEBI:58228"/>
    </ligand>
</feature>
<feature type="binding site" evidence="1">
    <location>
        <begin position="127"/>
        <end position="130"/>
    </location>
    <ligand>
        <name>carbamoyl phosphate</name>
        <dbReference type="ChEBI" id="CHEBI:58228"/>
    </ligand>
</feature>
<feature type="binding site" evidence="1">
    <location>
        <position position="158"/>
    </location>
    <ligand>
        <name>L-ornithine</name>
        <dbReference type="ChEBI" id="CHEBI:46911"/>
    </ligand>
</feature>
<feature type="binding site" evidence="1">
    <location>
        <position position="221"/>
    </location>
    <ligand>
        <name>L-ornithine</name>
        <dbReference type="ChEBI" id="CHEBI:46911"/>
    </ligand>
</feature>
<feature type="binding site" evidence="1">
    <location>
        <begin position="225"/>
        <end position="226"/>
    </location>
    <ligand>
        <name>L-ornithine</name>
        <dbReference type="ChEBI" id="CHEBI:46911"/>
    </ligand>
</feature>
<feature type="binding site" evidence="4">
    <location>
        <position position="260"/>
    </location>
    <ligand>
        <name>carbamoyl phosphate</name>
        <dbReference type="ChEBI" id="CHEBI:58228"/>
    </ligand>
</feature>
<feature type="binding site" evidence="1">
    <location>
        <position position="288"/>
    </location>
    <ligand>
        <name>carbamoyl phosphate</name>
        <dbReference type="ChEBI" id="CHEBI:58228"/>
    </ligand>
</feature>
<proteinExistence type="evidence at protein level"/>
<protein>
    <recommendedName>
        <fullName evidence="3">Ornithine carbamoyltransferase</fullName>
        <shortName evidence="3">OTCase</shortName>
        <ecNumber evidence="2">2.1.3.3</ecNumber>
    </recommendedName>
</protein>
<comment type="function">
    <text evidence="2">Reversibly catalyzes the transfer of the carbamoyl group from carbamoyl phosphate (CP) to the N(epsilon) atom of ornithine (ORN) to produce L-citrulline, which is a substrate for argininosuccinate synthetase, the enzyme involved in the final step in arginine biosynthesis.</text>
</comment>
<comment type="catalytic activity">
    <reaction evidence="2">
        <text>carbamoyl phosphate + L-ornithine = L-citrulline + phosphate + H(+)</text>
        <dbReference type="Rhea" id="RHEA:19513"/>
        <dbReference type="ChEBI" id="CHEBI:15378"/>
        <dbReference type="ChEBI" id="CHEBI:43474"/>
        <dbReference type="ChEBI" id="CHEBI:46911"/>
        <dbReference type="ChEBI" id="CHEBI:57743"/>
        <dbReference type="ChEBI" id="CHEBI:58228"/>
        <dbReference type="EC" id="2.1.3.3"/>
    </reaction>
</comment>
<comment type="activity regulation">
    <text evidence="2">Inhibited by excess of arginine and by the bisubstrate delta-N-phosphonoacetyl-L-ornithine (PALO).</text>
</comment>
<comment type="biophysicochemical properties">
    <kinetics>
        <KM evidence="2">0.9 mM for carbamoyl phosphate (at pH 9 and at 30 degrees Celsius)</KM>
        <KM evidence="2">1 mM for carbamoyl phosphate (at pH 9 and at 20 degrees Celsius)</KM>
        <KM evidence="2">1.1 mM for carbamoyl phosphate (at pH 9 and at 5 degrees Celsius)</KM>
        <KM evidence="2">1.78 mM for L-ornithine (at pH 9 and at 5 degrees Celsius)</KM>
        <KM evidence="2">8 mM for L-ornithine (at pH 9 and at 20 degrees Celsius)</KM>
        <KM evidence="2">45 mM for L-ornithine (at pH 9 and at 30 degrees Celsius)</KM>
        <text>kcat is 15 and 766 sec(-1) at 30 degrees Celsius and pH 9 for L-ornithine and carbamoyl phosphate, respectively. kcat is 87 and 694 sec(-1) at 20 degrees Celsius and pH 9 for L-ornithine and carbamoyl phosphate, respectively. kcat is 132 and 214 sec(-1) at 5 degrees Celsius and pH 9 for L-ornithine and carbamoyl phosphate, respectively.</text>
    </kinetics>
    <phDependence>
        <text evidence="2">Optimum pH is between 9 and 10.</text>
    </phDependence>
    <temperatureDependence>
        <text evidence="2">Optimum temperature is between 23 and 25 degrees Celsius. 37% of this maximal activity could still be observed at 5 degrees Celsius.</text>
    </temperatureDependence>
</comment>
<comment type="pathway">
    <text evidence="4">Amino-acid biosynthesis; L-arginine biosynthesis; L-arginine from L-ornithine and carbamoyl phosphate: step 1/3.</text>
</comment>
<comment type="subunit">
    <text evidence="2">The enzyme is present as a mixture of trimers and dodecamers, with the relative proportions of the two forms depending on the salt concentration. In addition, the trimeric fraction could reassociate into dodecamers when the salt concentration is increased. It appears that in vivo, the main fraction is in the dodecameric form.</text>
</comment>
<comment type="subcellular location">
    <subcellularLocation>
        <location evidence="4">Cytoplasm</location>
    </subcellularLocation>
</comment>
<comment type="similarity">
    <text evidence="4">Belongs to the aspartate/ornithine carbamoyltransferase superfamily. OTCase family.</text>
</comment>
<comment type="caution">
    <text evidence="5">Lacks the conserved threonine and leucine residues in positions 50 and 261, respectively, which are part of the carbamoylphosphate and ornithine binding sites; they are replaced by a leucine and a glutamine residue, respectively.</text>
</comment>
<name>OTC_MORAB</name>
<reference key="1">
    <citation type="journal article" date="2000" name="J. Bacteriol.">
        <title>Evolution of arginine biosynthesis in the bacterial domain: novel gene-enzyme relationships from psychrophilic Moritella strains (Vibrionaceae) and evolutionary significance of N-alpha-acetyl ornithinase.</title>
        <authorList>
            <person name="Xu Y."/>
            <person name="Liang Z."/>
            <person name="Legrain C."/>
            <person name="Ruger H.J."/>
            <person name="Glansdorff N."/>
        </authorList>
    </citation>
    <scope>NUCLEOTIDE SEQUENCE [GENOMIC DNA]</scope>
    <source>
        <strain>JCM 11436 / CIP 108121 / LMG 21258 / 2693</strain>
    </source>
</reference>
<reference key="2">
    <citation type="journal article" date="2003" name="J. Bacteriol.">
        <title>Metabolic enzymes from psychrophilic bacteria: challenge of adaptation to low temperatures in ornithine carbamoyltransferase from Moritella abyssi.</title>
        <authorList>
            <person name="Xu Y."/>
            <person name="Feller G."/>
            <person name="Gerday C."/>
            <person name="Glansdorff N."/>
        </authorList>
    </citation>
    <scope>PROTEIN SEQUENCE OF 1-6</scope>
    <scope>FUNCTION AS AN OTCASE</scope>
    <scope>CATALYTIC ACTIVITY</scope>
    <scope>BIOPHYSICOCHEMICAL PROPERTIES</scope>
    <scope>ACTIVITY REGULATION</scope>
    <scope>SUBUNIT</scope>
    <source>
        <strain>JCM 11436 / CIP 108121 / LMG 21258 / 2693</strain>
    </source>
</reference>